<accession>Q6P2S7</accession>
<accession>Q05DD4</accession>
<name>TTC41_HUMAN</name>
<reference key="1">
    <citation type="journal article" date="2006" name="Nature">
        <title>The finished DNA sequence of human chromosome 12.</title>
        <authorList>
            <person name="Scherer S.E."/>
            <person name="Muzny D.M."/>
            <person name="Buhay C.J."/>
            <person name="Chen R."/>
            <person name="Cree A."/>
            <person name="Ding Y."/>
            <person name="Dugan-Rocha S."/>
            <person name="Gill R."/>
            <person name="Gunaratne P."/>
            <person name="Harris R.A."/>
            <person name="Hawes A.C."/>
            <person name="Hernandez J."/>
            <person name="Hodgson A.V."/>
            <person name="Hume J."/>
            <person name="Jackson A."/>
            <person name="Khan Z.M."/>
            <person name="Kovar-Smith C."/>
            <person name="Lewis L.R."/>
            <person name="Lozado R.J."/>
            <person name="Metzker M.L."/>
            <person name="Milosavljevic A."/>
            <person name="Miner G.R."/>
            <person name="Montgomery K.T."/>
            <person name="Morgan M.B."/>
            <person name="Nazareth L.V."/>
            <person name="Scott G."/>
            <person name="Sodergren E."/>
            <person name="Song X.-Z."/>
            <person name="Steffen D."/>
            <person name="Lovering R.C."/>
            <person name="Wheeler D.A."/>
            <person name="Worley K.C."/>
            <person name="Yuan Y."/>
            <person name="Zhang Z."/>
            <person name="Adams C.Q."/>
            <person name="Ansari-Lari M.A."/>
            <person name="Ayele M."/>
            <person name="Brown M.J."/>
            <person name="Chen G."/>
            <person name="Chen Z."/>
            <person name="Clerc-Blankenburg K.P."/>
            <person name="Davis C."/>
            <person name="Delgado O."/>
            <person name="Dinh H.H."/>
            <person name="Draper H."/>
            <person name="Gonzalez-Garay M.L."/>
            <person name="Havlak P."/>
            <person name="Jackson L.R."/>
            <person name="Jacob L.S."/>
            <person name="Kelly S.H."/>
            <person name="Li L."/>
            <person name="Li Z."/>
            <person name="Liu J."/>
            <person name="Liu W."/>
            <person name="Lu J."/>
            <person name="Maheshwari M."/>
            <person name="Nguyen B.-V."/>
            <person name="Okwuonu G.O."/>
            <person name="Pasternak S."/>
            <person name="Perez L.M."/>
            <person name="Plopper F.J.H."/>
            <person name="Santibanez J."/>
            <person name="Shen H."/>
            <person name="Tabor P.E."/>
            <person name="Verduzco D."/>
            <person name="Waldron L."/>
            <person name="Wang Q."/>
            <person name="Williams G.A."/>
            <person name="Zhang J."/>
            <person name="Zhou J."/>
            <person name="Allen C.C."/>
            <person name="Amin A.G."/>
            <person name="Anyalebechi V."/>
            <person name="Bailey M."/>
            <person name="Barbaria J.A."/>
            <person name="Bimage K.E."/>
            <person name="Bryant N.P."/>
            <person name="Burch P.E."/>
            <person name="Burkett C.E."/>
            <person name="Burrell K.L."/>
            <person name="Calderon E."/>
            <person name="Cardenas V."/>
            <person name="Carter K."/>
            <person name="Casias K."/>
            <person name="Cavazos I."/>
            <person name="Cavazos S.R."/>
            <person name="Ceasar H."/>
            <person name="Chacko J."/>
            <person name="Chan S.N."/>
            <person name="Chavez D."/>
            <person name="Christopoulos C."/>
            <person name="Chu J."/>
            <person name="Cockrell R."/>
            <person name="Cox C.D."/>
            <person name="Dang M."/>
            <person name="Dathorne S.R."/>
            <person name="David R."/>
            <person name="Davis C.M."/>
            <person name="Davy-Carroll L."/>
            <person name="Deshazo D.R."/>
            <person name="Donlin J.E."/>
            <person name="D'Souza L."/>
            <person name="Eaves K.A."/>
            <person name="Egan A."/>
            <person name="Emery-Cohen A.J."/>
            <person name="Escotto M."/>
            <person name="Flagg N."/>
            <person name="Forbes L.D."/>
            <person name="Gabisi A.M."/>
            <person name="Garza M."/>
            <person name="Hamilton C."/>
            <person name="Henderson N."/>
            <person name="Hernandez O."/>
            <person name="Hines S."/>
            <person name="Hogues M.E."/>
            <person name="Huang M."/>
            <person name="Idlebird D.G."/>
            <person name="Johnson R."/>
            <person name="Jolivet A."/>
            <person name="Jones S."/>
            <person name="Kagan R."/>
            <person name="King L.M."/>
            <person name="Leal B."/>
            <person name="Lebow H."/>
            <person name="Lee S."/>
            <person name="LeVan J.M."/>
            <person name="Lewis L.C."/>
            <person name="London P."/>
            <person name="Lorensuhewa L.M."/>
            <person name="Loulseged H."/>
            <person name="Lovett D.A."/>
            <person name="Lucier A."/>
            <person name="Lucier R.L."/>
            <person name="Ma J."/>
            <person name="Madu R.C."/>
            <person name="Mapua P."/>
            <person name="Martindale A.D."/>
            <person name="Martinez E."/>
            <person name="Massey E."/>
            <person name="Mawhiney S."/>
            <person name="Meador M.G."/>
            <person name="Mendez S."/>
            <person name="Mercado C."/>
            <person name="Mercado I.C."/>
            <person name="Merritt C.E."/>
            <person name="Miner Z.L."/>
            <person name="Minja E."/>
            <person name="Mitchell T."/>
            <person name="Mohabbat F."/>
            <person name="Mohabbat K."/>
            <person name="Montgomery B."/>
            <person name="Moore N."/>
            <person name="Morris S."/>
            <person name="Munidasa M."/>
            <person name="Ngo R.N."/>
            <person name="Nguyen N.B."/>
            <person name="Nickerson E."/>
            <person name="Nwaokelemeh O.O."/>
            <person name="Nwokenkwo S."/>
            <person name="Obregon M."/>
            <person name="Oguh M."/>
            <person name="Oragunye N."/>
            <person name="Oviedo R.J."/>
            <person name="Parish B.J."/>
            <person name="Parker D.N."/>
            <person name="Parrish J."/>
            <person name="Parks K.L."/>
            <person name="Paul H.A."/>
            <person name="Payton B.A."/>
            <person name="Perez A."/>
            <person name="Perrin W."/>
            <person name="Pickens A."/>
            <person name="Primus E.L."/>
            <person name="Pu L.-L."/>
            <person name="Puazo M."/>
            <person name="Quiles M.M."/>
            <person name="Quiroz J.B."/>
            <person name="Rabata D."/>
            <person name="Reeves K."/>
            <person name="Ruiz S.J."/>
            <person name="Shao H."/>
            <person name="Sisson I."/>
            <person name="Sonaike T."/>
            <person name="Sorelle R.P."/>
            <person name="Sutton A.E."/>
            <person name="Svatek A.F."/>
            <person name="Svetz L.A."/>
            <person name="Tamerisa K.S."/>
            <person name="Taylor T.R."/>
            <person name="Teague B."/>
            <person name="Thomas N."/>
            <person name="Thorn R.D."/>
            <person name="Trejos Z.Y."/>
            <person name="Trevino B.K."/>
            <person name="Ukegbu O.N."/>
            <person name="Urban J.B."/>
            <person name="Vasquez L.I."/>
            <person name="Vera V.A."/>
            <person name="Villasana D.M."/>
            <person name="Wang L."/>
            <person name="Ward-Moore S."/>
            <person name="Warren J.T."/>
            <person name="Wei X."/>
            <person name="White F."/>
            <person name="Williamson A.L."/>
            <person name="Wleczyk R."/>
            <person name="Wooden H.S."/>
            <person name="Wooden S.H."/>
            <person name="Yen J."/>
            <person name="Yoon L."/>
            <person name="Yoon V."/>
            <person name="Zorrilla S.E."/>
            <person name="Nelson D."/>
            <person name="Kucherlapati R."/>
            <person name="Weinstock G."/>
            <person name="Gibbs R.A."/>
        </authorList>
    </citation>
    <scope>NUCLEOTIDE SEQUENCE [LARGE SCALE GENOMIC DNA]</scope>
</reference>
<reference key="2">
    <citation type="journal article" date="2004" name="Genome Res.">
        <title>The status, quality, and expansion of the NIH full-length cDNA project: the Mammalian Gene Collection (MGC).</title>
        <authorList>
            <consortium name="The MGC Project Team"/>
        </authorList>
    </citation>
    <scope>NUCLEOTIDE SEQUENCE [LARGE SCALE MRNA] (ISOFORM 3)</scope>
    <scope>NUCLEOTIDE SEQUENCE [LARGE SCALE MRNA] OF 854-1318 (ISOFORM 2)</scope>
    <source>
        <tissue>Bone</tissue>
        <tissue>Glioblastoma</tissue>
    </source>
</reference>
<evidence type="ECO:0000250" key="1"/>
<evidence type="ECO:0000250" key="2">
    <source>
        <dbReference type="UniProtKB" id="Q692V3"/>
    </source>
</evidence>
<evidence type="ECO:0000303" key="3">
    <source>
    </source>
</evidence>
<evidence type="ECO:0000305" key="4"/>
<gene>
    <name evidence="4" type="primary">TTC41P</name>
    <name evidence="2" type="synonym">GNN</name>
</gene>
<keyword id="KW-0025">Alternative splicing</keyword>
<keyword id="KW-0963">Cytoplasm</keyword>
<keyword id="KW-1185">Reference proteome</keyword>
<keyword id="KW-0677">Repeat</keyword>
<keyword id="KW-0802">TPR repeat</keyword>
<dbReference type="EMBL" id="AC012386">
    <property type="status" value="NOT_ANNOTATED_CDS"/>
    <property type="molecule type" value="Genomic_DNA"/>
</dbReference>
<dbReference type="EMBL" id="AC012555">
    <property type="status" value="NOT_ANNOTATED_CDS"/>
    <property type="molecule type" value="Genomic_DNA"/>
</dbReference>
<dbReference type="EMBL" id="AC084199">
    <property type="status" value="NOT_ANNOTATED_CDS"/>
    <property type="molecule type" value="Genomic_DNA"/>
</dbReference>
<dbReference type="EMBL" id="BC016335">
    <property type="status" value="NOT_ANNOTATED_CDS"/>
    <property type="molecule type" value="mRNA"/>
</dbReference>
<dbReference type="EMBL" id="BC064342">
    <property type="status" value="NOT_ANNOTATED_CDS"/>
    <property type="molecule type" value="mRNA"/>
</dbReference>
<dbReference type="SMR" id="Q6P2S7"/>
<dbReference type="IntAct" id="Q6P2S7">
    <property type="interactions" value="1"/>
</dbReference>
<dbReference type="GlyGen" id="Q6P2S7">
    <property type="glycosylation" value="2 sites, 1 O-linked glycan (1 site)"/>
</dbReference>
<dbReference type="iPTMnet" id="Q6P2S7"/>
<dbReference type="PhosphoSitePlus" id="Q6P2S7"/>
<dbReference type="BioMuta" id="HGNC:49210"/>
<dbReference type="DMDM" id="193806376"/>
<dbReference type="MassIVE" id="Q6P2S7"/>
<dbReference type="ProteomicsDB" id="66919">
    <molecule id="Q6P2S7-1"/>
</dbReference>
<dbReference type="ProteomicsDB" id="66920">
    <molecule id="Q6P2S7-2"/>
</dbReference>
<dbReference type="ProteomicsDB" id="66921">
    <molecule id="Q6P2S7-3"/>
</dbReference>
<dbReference type="AGR" id="HGNC:49210"/>
<dbReference type="GeneCards" id="TTC41P"/>
<dbReference type="HGNC" id="HGNC:49210">
    <property type="gene designation" value="TTC41P"/>
</dbReference>
<dbReference type="neXtProt" id="NX_Q6P2S7"/>
<dbReference type="InParanoid" id="Q6P2S7"/>
<dbReference type="PAN-GO" id="Q6P2S7">
    <property type="GO annotations" value="0 GO annotations based on evolutionary models"/>
</dbReference>
<dbReference type="PhylomeDB" id="Q6P2S7"/>
<dbReference type="PathwayCommons" id="Q6P2S7"/>
<dbReference type="SignaLink" id="Q6P2S7"/>
<dbReference type="Pharos" id="Q6P2S7">
    <property type="development level" value="Tdark"/>
</dbReference>
<dbReference type="Proteomes" id="UP000005640">
    <property type="component" value="Unplaced"/>
</dbReference>
<dbReference type="RNAct" id="Q6P2S7">
    <property type="molecule type" value="protein"/>
</dbReference>
<dbReference type="GO" id="GO:0005737">
    <property type="term" value="C:cytoplasm"/>
    <property type="evidence" value="ECO:0007669"/>
    <property type="project" value="UniProtKB-SubCell"/>
</dbReference>
<dbReference type="Gene3D" id="1.25.40.10">
    <property type="entry name" value="Tetratricopeptide repeat domain"/>
    <property type="match status" value="1"/>
</dbReference>
<dbReference type="InterPro" id="IPR051191">
    <property type="entry name" value="DCAF12"/>
</dbReference>
<dbReference type="InterPro" id="IPR027417">
    <property type="entry name" value="P-loop_NTPase"/>
</dbReference>
<dbReference type="InterPro" id="IPR011990">
    <property type="entry name" value="TPR-like_helical_dom_sf"/>
</dbReference>
<dbReference type="PANTHER" id="PTHR19860">
    <property type="entry name" value="DDB1- AND CUL4-ASSOCIATED FACTOR 12-RELATED"/>
    <property type="match status" value="1"/>
</dbReference>
<dbReference type="PANTHER" id="PTHR19860:SF18">
    <property type="entry name" value="DUF4062 DOMAIN-CONTAINING PROTEIN"/>
    <property type="match status" value="1"/>
</dbReference>
<dbReference type="SUPFAM" id="SSF52540">
    <property type="entry name" value="P-loop containing nucleoside triphosphate hydrolases"/>
    <property type="match status" value="1"/>
</dbReference>
<proteinExistence type="uncertain"/>
<organism>
    <name type="scientific">Homo sapiens</name>
    <name type="common">Human</name>
    <dbReference type="NCBI Taxonomy" id="9606"/>
    <lineage>
        <taxon>Eukaryota</taxon>
        <taxon>Metazoa</taxon>
        <taxon>Chordata</taxon>
        <taxon>Craniata</taxon>
        <taxon>Vertebrata</taxon>
        <taxon>Euteleostomi</taxon>
        <taxon>Mammalia</taxon>
        <taxon>Eutheria</taxon>
        <taxon>Euarchontoglires</taxon>
        <taxon>Primates</taxon>
        <taxon>Haplorrhini</taxon>
        <taxon>Catarrhini</taxon>
        <taxon>Hominidae</taxon>
        <taxon>Homo</taxon>
    </lineage>
</organism>
<comment type="subcellular location">
    <subcellularLocation>
        <location evidence="1">Cytoplasm</location>
    </subcellularLocation>
</comment>
<comment type="alternative products">
    <event type="alternative splicing"/>
    <isoform>
        <id>Q6P2S7-1</id>
        <name>1</name>
        <sequence type="displayed"/>
    </isoform>
    <isoform>
        <id>Q6P2S7-2</id>
        <name>2</name>
        <sequence type="described" ref="VSP_034495 VSP_034496"/>
    </isoform>
    <isoform>
        <id>Q6P2S7-3</id>
        <name>3</name>
        <sequence type="described" ref="VSP_034494"/>
    </isoform>
</comment>
<comment type="caution">
    <text evidence="4">Could be the product of a pseudogene.</text>
</comment>
<protein>
    <recommendedName>
        <fullName evidence="2">Putative tetratricopeptide repeat protein 41</fullName>
        <shortName evidence="2">TPR repeat protein 41</shortName>
    </recommendedName>
    <alternativeName>
        <fullName evidence="2">Grp94-neighboring nucleotidase</fullName>
    </alternativeName>
</protein>
<sequence>MSQKTNENVERYTQFLQKPQKPIQPYICSTLNDFQEERDFLANNIFPQLNELCNSWGTYFKAVDLSWSALKAPKSLPTHLFRQYSCLRSQRLKLCLDYVNSCFPFFICMLGQTYGDFLPDYSHFMTSKVTRLSSLSKVENLYVAAKNGYPWVLENPSCSLTEFEIIQAAFLNESQFQYFYFRTGTTLLKALDDEKKGERLPSSSSTNEEETLRIGKLKAKIISKGLPVRFYSDLHELGELVFKDWSVVIEKLHPATLMIENIDYKHSFERFYHEEFTEKCKQMCVISKESDRTFEILEKFALKDVELDFNNVAADSSLDSVPRFFRINPTPTYKSILLLSREHGCGKSTLIANWVNYFKKKHPSMLLIPHFVGSTCESSYIMSVIHYFITELQYRNYGTQLETDILNEDSDGLVFSFLVEVFIASISLKPCILVLDGIEELIGIYGISGQKVKDFSWLPHSLSPHCKFIMSTVSSSLSYKSLCARPDVRTVELISTGDEETKLNIFRKHLSIPMMDPFEQSTQALRKKPDLSPLKLTILANELKEYRINHNEFQCMKEYLEAVSVQELWELVLKRWIEDYSWTFQPKRANSDTVASGEGLDSWVADALCLLCLSHGGLAEDELLQLLDMLGYRNHYKVTALHWAAFRNATKQWVQEKPNGLLYFWHQSLSAVEHKLLGVITPVESSPCSFQTPMNHKKTHFHQVLIRYFQRQTSFWRVYQELPWHMKMSGCLRGLCGFLSSPTITDFISKIQSLGFWTRLHLIHFWNVLLEAGYDVSEAYLLSVAKIKADQCHTMRKSGTLSVLQCRLIELTVLDKCRLMFFIGSFLKFMGKTNEAEELFLSVEDMLVQSQSMTDMLLKVQNAIGELYLETGMTQEGFQYFQKAWSSMLRLSLSDLEDSRDLVKQKVRVLDNLAKSASEEYLKENHILEYATEISNLLDNNPRDQATMKYIEGVLMFVAGNTSLAKMKLRECLNIRKSLFGKKNMLVGEVMEFLADLLFFPQRDSKKSQRKQVLKYYKQVIKIKENAETLAKSSLLRKQLSISLSDTLCKLAGHLLASDSCHHVMIEAVGYLYRSVDLRVIHLGSSHSSIHGIHGILHLLREIEWIRSRRYWPQGMSQQHSEGSRNGFSLWEHLVKLNYHSAQSSNTVSSAMCMNADKLHRARRMDLAPQTISDKSKCAPGKGKKKPIICISAEEKIQRKTQNNAEIWNGSGKEASKKKTDYSSNILSLGKMNGLIKLSRQRILLAKSESGEGEITTIYHHPLPWPVSTKNPGESEFISEKWLFHSPDYISISQKSFLQRRLHIETKLLKTSNDINKE</sequence>
<feature type="chain" id="PRO_0000325940" description="Putative tetratricopeptide repeat protein 41">
    <location>
        <begin position="1"/>
        <end position="1318"/>
    </location>
</feature>
<feature type="repeat" description="TPR 1">
    <location>
        <begin position="399"/>
        <end position="432"/>
    </location>
</feature>
<feature type="repeat" description="TPR 2">
    <location>
        <begin position="653"/>
        <end position="684"/>
    </location>
</feature>
<feature type="repeat" description="TPR 3">
    <location>
        <begin position="817"/>
        <end position="850"/>
    </location>
</feature>
<feature type="repeat" description="TPR 4">
    <location>
        <begin position="858"/>
        <end position="891"/>
    </location>
</feature>
<feature type="repeat" description="TPR 5">
    <location>
        <begin position="991"/>
        <end position="1027"/>
    </location>
</feature>
<feature type="repeat" description="TPR 6">
    <location>
        <begin position="1045"/>
        <end position="1082"/>
    </location>
</feature>
<feature type="splice variant" id="VSP_034494" description="In isoform 3." evidence="3">
    <location>
        <begin position="140"/>
        <end position="1318"/>
    </location>
</feature>
<feature type="splice variant" id="VSP_034495" description="In isoform 2." evidence="3">
    <original>G</original>
    <variation>F</variation>
    <location>
        <position position="1053"/>
    </location>
</feature>
<feature type="splice variant" id="VSP_034496" description="In isoform 2." evidence="3">
    <location>
        <begin position="1054"/>
        <end position="1318"/>
    </location>
</feature>